<protein>
    <recommendedName>
        <fullName evidence="1">Arginine repressor</fullName>
    </recommendedName>
</protein>
<sequence length="148" mass="16093">MGKQLRQMKIKEILHNHDVGNQNDLIRLLDKAGIEVAQATLSRDCTELGIIRSRTHQGFRLVLPEDSPGQIIRGLVGMEVQSISSNETAIVIKTLPGRAHGVASFLDQLKDIAILGTIAGDDTVLVIPLSIKDIASIIHDIQSNLSQT</sequence>
<proteinExistence type="inferred from homology"/>
<comment type="function">
    <text evidence="1">Regulates arginine biosynthesis genes.</text>
</comment>
<comment type="pathway">
    <text>Amino-acid biosynthesis; L-arginine biosynthesis [regulation].</text>
</comment>
<comment type="subcellular location">
    <subcellularLocation>
        <location evidence="1">Cytoplasm</location>
    </subcellularLocation>
</comment>
<comment type="similarity">
    <text evidence="1">Belongs to the ArgR family.</text>
</comment>
<keyword id="KW-0028">Amino-acid biosynthesis</keyword>
<keyword id="KW-0055">Arginine biosynthesis</keyword>
<keyword id="KW-0963">Cytoplasm</keyword>
<keyword id="KW-0238">DNA-binding</keyword>
<keyword id="KW-0678">Repressor</keyword>
<keyword id="KW-0804">Transcription</keyword>
<keyword id="KW-0805">Transcription regulation</keyword>
<organism>
    <name type="scientific">Prosthecochloris aestuarii (strain DSM 271 / SK 413)</name>
    <dbReference type="NCBI Taxonomy" id="290512"/>
    <lineage>
        <taxon>Bacteria</taxon>
        <taxon>Pseudomonadati</taxon>
        <taxon>Chlorobiota</taxon>
        <taxon>Chlorobiia</taxon>
        <taxon>Chlorobiales</taxon>
        <taxon>Chlorobiaceae</taxon>
        <taxon>Prosthecochloris</taxon>
    </lineage>
</organism>
<accession>B4S7S0</accession>
<reference key="1">
    <citation type="submission" date="2008-06" db="EMBL/GenBank/DDBJ databases">
        <title>Complete sequence of chromosome of Prosthecochloris aestuarii DSM 271.</title>
        <authorList>
            <consortium name="US DOE Joint Genome Institute"/>
            <person name="Lucas S."/>
            <person name="Copeland A."/>
            <person name="Lapidus A."/>
            <person name="Glavina del Rio T."/>
            <person name="Dalin E."/>
            <person name="Tice H."/>
            <person name="Bruce D."/>
            <person name="Goodwin L."/>
            <person name="Pitluck S."/>
            <person name="Schmutz J."/>
            <person name="Larimer F."/>
            <person name="Land M."/>
            <person name="Hauser L."/>
            <person name="Kyrpides N."/>
            <person name="Anderson I."/>
            <person name="Liu Z."/>
            <person name="Li T."/>
            <person name="Zhao F."/>
            <person name="Overmann J."/>
            <person name="Bryant D.A."/>
            <person name="Richardson P."/>
        </authorList>
    </citation>
    <scope>NUCLEOTIDE SEQUENCE [LARGE SCALE GENOMIC DNA]</scope>
    <source>
        <strain>DSM 271 / SK 413</strain>
    </source>
</reference>
<gene>
    <name evidence="1" type="primary">argR</name>
    <name type="ordered locus">Paes_1072</name>
</gene>
<dbReference type="EMBL" id="CP001108">
    <property type="protein sequence ID" value="ACF46107.1"/>
    <property type="molecule type" value="Genomic_DNA"/>
</dbReference>
<dbReference type="RefSeq" id="WP_012505644.1">
    <property type="nucleotide sequence ID" value="NC_011059.1"/>
</dbReference>
<dbReference type="SMR" id="B4S7S0"/>
<dbReference type="STRING" id="290512.Paes_1072"/>
<dbReference type="KEGG" id="paa:Paes_1072"/>
<dbReference type="eggNOG" id="COG1438">
    <property type="taxonomic scope" value="Bacteria"/>
</dbReference>
<dbReference type="HOGENOM" id="CLU_097103_3_0_10"/>
<dbReference type="UniPathway" id="UPA00068"/>
<dbReference type="Proteomes" id="UP000002725">
    <property type="component" value="Chromosome"/>
</dbReference>
<dbReference type="GO" id="GO:0005737">
    <property type="term" value="C:cytoplasm"/>
    <property type="evidence" value="ECO:0007669"/>
    <property type="project" value="UniProtKB-SubCell"/>
</dbReference>
<dbReference type="GO" id="GO:0034618">
    <property type="term" value="F:arginine binding"/>
    <property type="evidence" value="ECO:0007669"/>
    <property type="project" value="InterPro"/>
</dbReference>
<dbReference type="GO" id="GO:0003677">
    <property type="term" value="F:DNA binding"/>
    <property type="evidence" value="ECO:0007669"/>
    <property type="project" value="UniProtKB-KW"/>
</dbReference>
<dbReference type="GO" id="GO:0003700">
    <property type="term" value="F:DNA-binding transcription factor activity"/>
    <property type="evidence" value="ECO:0007669"/>
    <property type="project" value="UniProtKB-UniRule"/>
</dbReference>
<dbReference type="GO" id="GO:0006526">
    <property type="term" value="P:L-arginine biosynthetic process"/>
    <property type="evidence" value="ECO:0007669"/>
    <property type="project" value="UniProtKB-UniPathway"/>
</dbReference>
<dbReference type="GO" id="GO:0051259">
    <property type="term" value="P:protein complex oligomerization"/>
    <property type="evidence" value="ECO:0007669"/>
    <property type="project" value="InterPro"/>
</dbReference>
<dbReference type="GO" id="GO:1900079">
    <property type="term" value="P:regulation of arginine biosynthetic process"/>
    <property type="evidence" value="ECO:0007669"/>
    <property type="project" value="UniProtKB-UniRule"/>
</dbReference>
<dbReference type="Gene3D" id="3.30.1360.40">
    <property type="match status" value="1"/>
</dbReference>
<dbReference type="Gene3D" id="1.10.10.10">
    <property type="entry name" value="Winged helix-like DNA-binding domain superfamily/Winged helix DNA-binding domain"/>
    <property type="match status" value="1"/>
</dbReference>
<dbReference type="HAMAP" id="MF_00173">
    <property type="entry name" value="Arg_repressor"/>
    <property type="match status" value="1"/>
</dbReference>
<dbReference type="InterPro" id="IPR001669">
    <property type="entry name" value="Arg_repress"/>
</dbReference>
<dbReference type="InterPro" id="IPR020899">
    <property type="entry name" value="Arg_repress_C"/>
</dbReference>
<dbReference type="InterPro" id="IPR036251">
    <property type="entry name" value="Arg_repress_C_sf"/>
</dbReference>
<dbReference type="InterPro" id="IPR020900">
    <property type="entry name" value="Arg_repress_DNA-bd"/>
</dbReference>
<dbReference type="InterPro" id="IPR036388">
    <property type="entry name" value="WH-like_DNA-bd_sf"/>
</dbReference>
<dbReference type="InterPro" id="IPR036390">
    <property type="entry name" value="WH_DNA-bd_sf"/>
</dbReference>
<dbReference type="PANTHER" id="PTHR34471">
    <property type="entry name" value="ARGININE REPRESSOR"/>
    <property type="match status" value="1"/>
</dbReference>
<dbReference type="PANTHER" id="PTHR34471:SF1">
    <property type="entry name" value="ARGININE REPRESSOR"/>
    <property type="match status" value="1"/>
</dbReference>
<dbReference type="Pfam" id="PF01316">
    <property type="entry name" value="Arg_repressor"/>
    <property type="match status" value="1"/>
</dbReference>
<dbReference type="Pfam" id="PF02863">
    <property type="entry name" value="Arg_repressor_C"/>
    <property type="match status" value="1"/>
</dbReference>
<dbReference type="PRINTS" id="PR01467">
    <property type="entry name" value="ARGREPRESSOR"/>
</dbReference>
<dbReference type="SUPFAM" id="SSF55252">
    <property type="entry name" value="C-terminal domain of arginine repressor"/>
    <property type="match status" value="1"/>
</dbReference>
<dbReference type="SUPFAM" id="SSF46785">
    <property type="entry name" value="Winged helix' DNA-binding domain"/>
    <property type="match status" value="1"/>
</dbReference>
<evidence type="ECO:0000255" key="1">
    <source>
        <dbReference type="HAMAP-Rule" id="MF_00173"/>
    </source>
</evidence>
<name>ARGR_PROA2</name>
<feature type="chain" id="PRO_1000097878" description="Arginine repressor">
    <location>
        <begin position="1"/>
        <end position="148"/>
    </location>
</feature>